<proteinExistence type="inferred from homology"/>
<reference key="1">
    <citation type="journal article" date="2008" name="Science">
        <title>The Physcomitrella genome reveals evolutionary insights into the conquest of land by plants.</title>
        <authorList>
            <person name="Rensing S.A."/>
            <person name="Lang D."/>
            <person name="Zimmer A.D."/>
            <person name="Terry A."/>
            <person name="Salamov A."/>
            <person name="Shapiro H."/>
            <person name="Nishiyama T."/>
            <person name="Perroud P.-F."/>
            <person name="Lindquist E.A."/>
            <person name="Kamisugi Y."/>
            <person name="Tanahashi T."/>
            <person name="Sakakibara K."/>
            <person name="Fujita T."/>
            <person name="Oishi K."/>
            <person name="Shin-I T."/>
            <person name="Kuroki Y."/>
            <person name="Toyoda A."/>
            <person name="Suzuki Y."/>
            <person name="Hashimoto S.-I."/>
            <person name="Yamaguchi K."/>
            <person name="Sugano S."/>
            <person name="Kohara Y."/>
            <person name="Fujiyama A."/>
            <person name="Anterola A."/>
            <person name="Aoki S."/>
            <person name="Ashton N."/>
            <person name="Barbazuk W.B."/>
            <person name="Barker E."/>
            <person name="Bennetzen J.L."/>
            <person name="Blankenship R."/>
            <person name="Cho S.H."/>
            <person name="Dutcher S.K."/>
            <person name="Estelle M."/>
            <person name="Fawcett J.A."/>
            <person name="Gundlach H."/>
            <person name="Hanada K."/>
            <person name="Heyl A."/>
            <person name="Hicks K.A."/>
            <person name="Hughes J."/>
            <person name="Lohr M."/>
            <person name="Mayer K."/>
            <person name="Melkozernov A."/>
            <person name="Murata T."/>
            <person name="Nelson D.R."/>
            <person name="Pils B."/>
            <person name="Prigge M."/>
            <person name="Reiss B."/>
            <person name="Renner T."/>
            <person name="Rombauts S."/>
            <person name="Rushton P.J."/>
            <person name="Sanderfoot A."/>
            <person name="Schween G."/>
            <person name="Shiu S.-H."/>
            <person name="Stueber K."/>
            <person name="Theodoulou F.L."/>
            <person name="Tu H."/>
            <person name="Van de Peer Y."/>
            <person name="Verrier P.J."/>
            <person name="Waters E."/>
            <person name="Wood A."/>
            <person name="Yang L."/>
            <person name="Cove D."/>
            <person name="Cuming A.C."/>
            <person name="Hasebe M."/>
            <person name="Lucas S."/>
            <person name="Mishler B.D."/>
            <person name="Reski R."/>
            <person name="Grigoriev I.V."/>
            <person name="Quatrano R.S."/>
            <person name="Boore J.L."/>
        </authorList>
    </citation>
    <scope>NUCLEOTIDE SEQUENCE [LARGE SCALE GENOMIC DNA]</scope>
    <source>
        <strain>cv. Gransden 2004</strain>
    </source>
</reference>
<dbReference type="EC" id="2.4.2.60" evidence="1"/>
<dbReference type="EMBL" id="DS544899">
    <property type="protein sequence ID" value="EDQ81571.1"/>
    <property type="molecule type" value="Genomic_DNA"/>
</dbReference>
<dbReference type="RefSeq" id="XP_001753819.1">
    <property type="nucleotide sequence ID" value="XM_001753767.1"/>
</dbReference>
<dbReference type="SMR" id="A9RHX1"/>
<dbReference type="FunCoup" id="A9RHX1">
    <property type="interactions" value="1183"/>
</dbReference>
<dbReference type="PaxDb" id="3218-PP1S10_351V6.1"/>
<dbReference type="eggNOG" id="KOG2960">
    <property type="taxonomic scope" value="Eukaryota"/>
</dbReference>
<dbReference type="HOGENOM" id="CLU_053727_1_0_1"/>
<dbReference type="InParanoid" id="A9RHX1"/>
<dbReference type="Proteomes" id="UP000006727">
    <property type="component" value="Unplaced"/>
</dbReference>
<dbReference type="GO" id="GO:0009570">
    <property type="term" value="C:chloroplast stroma"/>
    <property type="evidence" value="ECO:0007669"/>
    <property type="project" value="UniProtKB-UniRule"/>
</dbReference>
<dbReference type="GO" id="GO:0005829">
    <property type="term" value="C:cytosol"/>
    <property type="evidence" value="ECO:0007669"/>
    <property type="project" value="UniProtKB-UniRule"/>
</dbReference>
<dbReference type="GO" id="GO:0160205">
    <property type="term" value="F:cysteine-dependent adenosine diphosphate thiazole synthase activity"/>
    <property type="evidence" value="ECO:0007669"/>
    <property type="project" value="UniProtKB-EC"/>
</dbReference>
<dbReference type="GO" id="GO:0005506">
    <property type="term" value="F:iron ion binding"/>
    <property type="evidence" value="ECO:0000318"/>
    <property type="project" value="GO_Central"/>
</dbReference>
<dbReference type="GO" id="GO:0009228">
    <property type="term" value="P:thiamine biosynthetic process"/>
    <property type="evidence" value="ECO:0007669"/>
    <property type="project" value="UniProtKB-UniRule"/>
</dbReference>
<dbReference type="GO" id="GO:0052837">
    <property type="term" value="P:thiazole biosynthetic process"/>
    <property type="evidence" value="ECO:0000318"/>
    <property type="project" value="GO_Central"/>
</dbReference>
<dbReference type="FunFam" id="3.50.50.60:FF:000070">
    <property type="entry name" value="Thiamine thiazole synthase, chloroplastic"/>
    <property type="match status" value="1"/>
</dbReference>
<dbReference type="Gene3D" id="6.10.250.2840">
    <property type="match status" value="1"/>
</dbReference>
<dbReference type="Gene3D" id="3.50.50.60">
    <property type="entry name" value="FAD/NAD(P)-binding domain"/>
    <property type="match status" value="1"/>
</dbReference>
<dbReference type="HAMAP" id="MF_03158">
    <property type="entry name" value="THI4"/>
    <property type="match status" value="1"/>
</dbReference>
<dbReference type="InterPro" id="IPR036188">
    <property type="entry name" value="FAD/NAD-bd_sf"/>
</dbReference>
<dbReference type="InterPro" id="IPR027495">
    <property type="entry name" value="Sti35"/>
</dbReference>
<dbReference type="InterPro" id="IPR002922">
    <property type="entry name" value="Thi4_fam"/>
</dbReference>
<dbReference type="NCBIfam" id="TIGR00292">
    <property type="entry name" value="sulfide-dependent adenosine diphosphate thiazole synthase"/>
    <property type="match status" value="1"/>
</dbReference>
<dbReference type="PANTHER" id="PTHR43422">
    <property type="entry name" value="THIAMINE THIAZOLE SYNTHASE"/>
    <property type="match status" value="1"/>
</dbReference>
<dbReference type="PANTHER" id="PTHR43422:SF3">
    <property type="entry name" value="THIAMINE THIAZOLE SYNTHASE"/>
    <property type="match status" value="1"/>
</dbReference>
<dbReference type="Pfam" id="PF01946">
    <property type="entry name" value="Thi4"/>
    <property type="match status" value="1"/>
</dbReference>
<dbReference type="SUPFAM" id="SSF51905">
    <property type="entry name" value="FAD/NAD(P)-binding domain"/>
    <property type="match status" value="1"/>
</dbReference>
<keyword id="KW-0150">Chloroplast</keyword>
<keyword id="KW-0408">Iron</keyword>
<keyword id="KW-0479">Metal-binding</keyword>
<keyword id="KW-0520">NAD</keyword>
<keyword id="KW-0934">Plastid</keyword>
<keyword id="KW-1185">Reference proteome</keyword>
<keyword id="KW-0784">Thiamine biosynthesis</keyword>
<keyword id="KW-0808">Transferase</keyword>
<keyword id="KW-0809">Transit peptide</keyword>
<sequence length="357" mass="37857">MSISAAGVATGLGANVELKSNVGSSSSSVAGVRLFTSRKAQLRRCAAPATSASLYSDANYDLNNYKFAPIKESIVAREMTRRYMTDMITHADTDVVVVGAGSAGLSCAYELSKNPNVKVAIVEQSVSPGGGAWLGGQLFSAMIVRKPAHRFLDEIEVPYEEMENYVVIKHAALFTSTIMSKLLARPNVKLFNAVAAEDLIIRGDRVSGVVTNWALVAQNHNTQSCMDPNVMEAKVVVSSCGHDGPFGATGVKRLRSIGMIESVPGMKCLDMNAAEDAIVKHTREVVPGMIVTGMEVAEIDGSPRMGPTFGAMMISGQKAAHLALKALGLPNELDGNYKPNVHPELVLASTDDETASA</sequence>
<protein>
    <recommendedName>
        <fullName evidence="1">Thiamine thiazole synthase 1, chloroplastic</fullName>
        <ecNumber evidence="1">2.4.2.60</ecNumber>
    </recommendedName>
    <alternativeName>
        <fullName evidence="1">Thiazole biosynthetic enzyme 1</fullName>
    </alternativeName>
</protein>
<evidence type="ECO:0000255" key="1">
    <source>
        <dbReference type="HAMAP-Rule" id="MF_03158"/>
    </source>
</evidence>
<organism>
    <name type="scientific">Physcomitrium patens</name>
    <name type="common">Spreading-leaved earth moss</name>
    <name type="synonym">Physcomitrella patens</name>
    <dbReference type="NCBI Taxonomy" id="3218"/>
    <lineage>
        <taxon>Eukaryota</taxon>
        <taxon>Viridiplantae</taxon>
        <taxon>Streptophyta</taxon>
        <taxon>Embryophyta</taxon>
        <taxon>Bryophyta</taxon>
        <taxon>Bryophytina</taxon>
        <taxon>Bryopsida</taxon>
        <taxon>Funariidae</taxon>
        <taxon>Funariales</taxon>
        <taxon>Funariaceae</taxon>
        <taxon>Physcomitrium</taxon>
    </lineage>
</organism>
<feature type="transit peptide" description="Chloroplast" evidence="1">
    <location>
        <begin position="1"/>
        <end position="51"/>
    </location>
</feature>
<feature type="chain" id="PRO_0000415861" description="Thiamine thiazole synthase 1, chloroplastic">
    <location>
        <begin position="52"/>
        <end position="357"/>
    </location>
</feature>
<feature type="binding site" evidence="1">
    <location>
        <position position="103"/>
    </location>
    <ligand>
        <name>substrate</name>
    </ligand>
</feature>
<feature type="binding site" evidence="1">
    <location>
        <begin position="123"/>
        <end position="124"/>
    </location>
    <ligand>
        <name>substrate</name>
    </ligand>
</feature>
<feature type="binding site" evidence="1">
    <location>
        <position position="131"/>
    </location>
    <ligand>
        <name>substrate</name>
    </ligand>
</feature>
<feature type="binding site" evidence="1">
    <location>
        <position position="196"/>
    </location>
    <ligand>
        <name>substrate</name>
    </ligand>
</feature>
<feature type="binding site" evidence="1">
    <location>
        <position position="227"/>
    </location>
    <ligand>
        <name>substrate</name>
    </ligand>
</feature>
<feature type="binding site" evidence="1">
    <location>
        <position position="242"/>
    </location>
    <ligand>
        <name>substrate</name>
    </ligand>
</feature>
<feature type="binding site" evidence="1">
    <location>
        <position position="294"/>
    </location>
    <ligand>
        <name>substrate</name>
    </ligand>
</feature>
<feature type="binding site" evidence="1">
    <location>
        <begin position="304"/>
        <end position="306"/>
    </location>
    <ligand>
        <name>substrate</name>
    </ligand>
</feature>
<feature type="modified residue" description="2,3-didehydroalanine (Cys)" evidence="1">
    <location>
        <position position="225"/>
    </location>
</feature>
<accession>A9RHX1</accession>
<gene>
    <name evidence="1" type="primary">THI1-1</name>
    <name type="ORF">PHYPADRAFT_175102</name>
</gene>
<name>THI41_PHYPA</name>
<comment type="function">
    <text evidence="1">Involved in biosynthesis of the thiamine precursor thiazole. Catalyzes the conversion of NAD and glycine to adenosine diphosphate 5-(2-hydroxyethyl)-4-methylthiazole-2-carboxylic acid (ADT), an adenylated thiazole intermediate. The reaction includes an iron-dependent sulfide transfer from a conserved cysteine residue of the protein to a thiazole intermediate. The enzyme can only undergo a single turnover, which suggests it is a suicide enzyme. May have additional roles in adaptation to various stress conditions and in DNA damage tolerance.</text>
</comment>
<comment type="catalytic activity">
    <reaction evidence="1">
        <text>[ADP-thiazole synthase]-L-cysteine + glycine + NAD(+) = [ADP-thiazole synthase]-dehydroalanine + ADP-5-ethyl-4-methylthiazole-2-carboxylate + nicotinamide + 3 H2O + 2 H(+)</text>
        <dbReference type="Rhea" id="RHEA:55708"/>
        <dbReference type="Rhea" id="RHEA-COMP:14264"/>
        <dbReference type="Rhea" id="RHEA-COMP:14265"/>
        <dbReference type="ChEBI" id="CHEBI:15377"/>
        <dbReference type="ChEBI" id="CHEBI:15378"/>
        <dbReference type="ChEBI" id="CHEBI:17154"/>
        <dbReference type="ChEBI" id="CHEBI:29950"/>
        <dbReference type="ChEBI" id="CHEBI:57305"/>
        <dbReference type="ChEBI" id="CHEBI:57540"/>
        <dbReference type="ChEBI" id="CHEBI:90873"/>
        <dbReference type="ChEBI" id="CHEBI:139151"/>
        <dbReference type="EC" id="2.4.2.60"/>
    </reaction>
</comment>
<comment type="cofactor">
    <cofactor evidence="1">
        <name>Fe cation</name>
        <dbReference type="ChEBI" id="CHEBI:24875"/>
    </cofactor>
    <text evidence="1">Binds 1 Fe cation per subunit.</text>
</comment>
<comment type="subunit">
    <text evidence="1">Homooctamer.</text>
</comment>
<comment type="subcellular location">
    <subcellularLocation>
        <location evidence="1">Plastid</location>
        <location evidence="1">Chloroplast</location>
    </subcellularLocation>
</comment>
<comment type="PTM">
    <text evidence="1">During the catalytic reaction, a sulfide is transferred from Cys-225 to a reaction intermediate, generating a dehydroalanine residue.</text>
</comment>
<comment type="similarity">
    <text evidence="1">Belongs to the THI4 family.</text>
</comment>